<protein>
    <recommendedName>
        <fullName evidence="7">Adenylate kinase 9</fullName>
        <ecNumber evidence="2">2.7.4.4</ecNumber>
        <ecNumber evidence="2">2.7.4.6</ecNumber>
    </recommendedName>
</protein>
<accession>G3UYQ4</accession>
<name>KAD9_MOUSE</name>
<reference key="1">
    <citation type="journal article" date="2009" name="PLoS Biol.">
        <title>Lineage-specific biology revealed by a finished genome assembly of the mouse.</title>
        <authorList>
            <person name="Church D.M."/>
            <person name="Goodstadt L."/>
            <person name="Hillier L.W."/>
            <person name="Zody M.C."/>
            <person name="Goldstein S."/>
            <person name="She X."/>
            <person name="Bult C.J."/>
            <person name="Agarwala R."/>
            <person name="Cherry J.L."/>
            <person name="DiCuccio M."/>
            <person name="Hlavina W."/>
            <person name="Kapustin Y."/>
            <person name="Meric P."/>
            <person name="Maglott D."/>
            <person name="Birtle Z."/>
            <person name="Marques A.C."/>
            <person name="Graves T."/>
            <person name="Zhou S."/>
            <person name="Teague B."/>
            <person name="Potamousis K."/>
            <person name="Churas C."/>
            <person name="Place M."/>
            <person name="Herschleb J."/>
            <person name="Runnheim R."/>
            <person name="Forrest D."/>
            <person name="Amos-Landgraf J."/>
            <person name="Schwartz D.C."/>
            <person name="Cheng Z."/>
            <person name="Lindblad-Toh K."/>
            <person name="Eichler E.E."/>
            <person name="Ponting C.P."/>
        </authorList>
    </citation>
    <scope>NUCLEOTIDE SEQUENCE [LARGE SCALE GENOMIC DNA]</scope>
    <source>
        <strain>C57BL/6J</strain>
    </source>
</reference>
<reference key="2">
    <citation type="journal article" date="2023" name="EBioMedicine">
        <title>Deficiency in AK9 causes asthenozoospermia and male infertility by destabilising sperm nucleotide homeostasis.</title>
        <authorList>
            <person name="Sha Y."/>
            <person name="Liu W."/>
            <person name="Li S."/>
            <person name="Osadchuk L.V."/>
            <person name="Chen Y."/>
            <person name="Nie H."/>
            <person name="Gao S."/>
            <person name="Xie L."/>
            <person name="Qin W."/>
            <person name="Zhou H."/>
            <person name="Li L."/>
        </authorList>
    </citation>
    <scope>DISRUPTION PHENOTYPE</scope>
    <scope>TISSUE SPECIFICITY</scope>
    <scope>SUBCELLULAR LOCATION</scope>
</reference>
<reference key="3">
    <citation type="journal article" date="2024" name="EBioMedicine">
        <authorList>
            <person name="Sha Y."/>
            <person name="Liu W."/>
            <person name="Li S."/>
            <person name="Osadchuk L.V."/>
            <person name="Chen Y."/>
            <person name="Nie H."/>
            <person name="Gao S."/>
            <person name="Xie L."/>
            <person name="Qin W."/>
            <person name="Zhou H."/>
            <person name="Li L."/>
        </authorList>
    </citation>
    <scope>ERRATUM OF PUBMED:37713809</scope>
</reference>
<proteinExistence type="evidence at transcript level"/>
<comment type="function">
    <text evidence="2">Broad-specificity nucleoside phosphate kinase involved in cellular nucleotide homeostasis by catalyzing nucleoside-phosphate interconversions. Similar to other adenylate kinases, preferentially catalyzes the phosphorylation of the nucleoside monophosphate AMP with ATP as phosphate donor to produce ADP. In vitro, can also catalyze the phosphorylation of CMP, dAMP and dCMP and use GTP as an alternate phosphate donor. Moreover, exhibits a diphosphate kinase activity, producing ATP, CTP, GTP, UTP, TTP, dATP, dCTP and dGTP from the corresponding diphosphate substrates with either ATP or GTP as phosphate donors. For this activity shows the following substrate preference CDP &gt; UDP &gt; ADP &gt; TDP.</text>
</comment>
<comment type="catalytic activity">
    <reaction evidence="2">
        <text>a ribonucleoside 5'-phosphate + ATP = a ribonucleoside 5'-diphosphate + ADP</text>
        <dbReference type="Rhea" id="RHEA:24036"/>
        <dbReference type="ChEBI" id="CHEBI:30616"/>
        <dbReference type="ChEBI" id="CHEBI:57930"/>
        <dbReference type="ChEBI" id="CHEBI:58043"/>
        <dbReference type="ChEBI" id="CHEBI:456216"/>
        <dbReference type="EC" id="2.7.4.4"/>
    </reaction>
</comment>
<comment type="catalytic activity">
    <reaction evidence="2">
        <text>AMP + ATP = 2 ADP</text>
        <dbReference type="Rhea" id="RHEA:12973"/>
        <dbReference type="ChEBI" id="CHEBI:30616"/>
        <dbReference type="ChEBI" id="CHEBI:456215"/>
        <dbReference type="ChEBI" id="CHEBI:456216"/>
    </reaction>
</comment>
<comment type="catalytic activity">
    <reaction evidence="2">
        <text>GTP + AMP = GDP + ADP</text>
        <dbReference type="Rhea" id="RHEA:29863"/>
        <dbReference type="ChEBI" id="CHEBI:37565"/>
        <dbReference type="ChEBI" id="CHEBI:58189"/>
        <dbReference type="ChEBI" id="CHEBI:456215"/>
        <dbReference type="ChEBI" id="CHEBI:456216"/>
    </reaction>
</comment>
<comment type="catalytic activity">
    <reaction evidence="2">
        <text>CMP + ATP = CDP + ADP</text>
        <dbReference type="Rhea" id="RHEA:11600"/>
        <dbReference type="ChEBI" id="CHEBI:30616"/>
        <dbReference type="ChEBI" id="CHEBI:58069"/>
        <dbReference type="ChEBI" id="CHEBI:60377"/>
        <dbReference type="ChEBI" id="CHEBI:456216"/>
    </reaction>
</comment>
<comment type="catalytic activity">
    <reaction evidence="2">
        <text>GTP + CMP = CDP + GDP</text>
        <dbReference type="Rhea" id="RHEA:79855"/>
        <dbReference type="ChEBI" id="CHEBI:37565"/>
        <dbReference type="ChEBI" id="CHEBI:58069"/>
        <dbReference type="ChEBI" id="CHEBI:58189"/>
        <dbReference type="ChEBI" id="CHEBI:60377"/>
    </reaction>
</comment>
<comment type="catalytic activity">
    <reaction evidence="2">
        <text>dAMP + ATP = dADP + ADP</text>
        <dbReference type="Rhea" id="RHEA:23100"/>
        <dbReference type="ChEBI" id="CHEBI:30616"/>
        <dbReference type="ChEBI" id="CHEBI:57667"/>
        <dbReference type="ChEBI" id="CHEBI:58245"/>
        <dbReference type="ChEBI" id="CHEBI:456216"/>
    </reaction>
</comment>
<comment type="catalytic activity">
    <reaction evidence="2">
        <text>dCMP + ATP = dCDP + ADP</text>
        <dbReference type="Rhea" id="RHEA:25094"/>
        <dbReference type="ChEBI" id="CHEBI:30616"/>
        <dbReference type="ChEBI" id="CHEBI:57566"/>
        <dbReference type="ChEBI" id="CHEBI:58593"/>
        <dbReference type="ChEBI" id="CHEBI:456216"/>
    </reaction>
</comment>
<comment type="catalytic activity">
    <reaction evidence="2">
        <text>a ribonucleoside 5'-diphosphate + ATP = a ribonucleoside 5'-triphosphate + ADP</text>
        <dbReference type="Rhea" id="RHEA:18113"/>
        <dbReference type="ChEBI" id="CHEBI:30616"/>
        <dbReference type="ChEBI" id="CHEBI:57930"/>
        <dbReference type="ChEBI" id="CHEBI:61557"/>
        <dbReference type="ChEBI" id="CHEBI:456216"/>
        <dbReference type="EC" id="2.7.4.6"/>
    </reaction>
</comment>
<comment type="catalytic activity">
    <reaction evidence="2">
        <text>CDP + ATP = CTP + ADP</text>
        <dbReference type="Rhea" id="RHEA:25237"/>
        <dbReference type="ChEBI" id="CHEBI:30616"/>
        <dbReference type="ChEBI" id="CHEBI:37563"/>
        <dbReference type="ChEBI" id="CHEBI:58069"/>
        <dbReference type="ChEBI" id="CHEBI:456216"/>
        <dbReference type="EC" id="2.7.4.6"/>
    </reaction>
</comment>
<comment type="catalytic activity">
    <reaction evidence="2">
        <text>CDP + GTP = CTP + GDP</text>
        <dbReference type="Rhea" id="RHEA:79859"/>
        <dbReference type="ChEBI" id="CHEBI:37563"/>
        <dbReference type="ChEBI" id="CHEBI:37565"/>
        <dbReference type="ChEBI" id="CHEBI:58069"/>
        <dbReference type="ChEBI" id="CHEBI:58189"/>
    </reaction>
</comment>
<comment type="catalytic activity">
    <reaction evidence="2">
        <text>GDP + ATP = GTP + ADP</text>
        <dbReference type="Rhea" id="RHEA:27686"/>
        <dbReference type="ChEBI" id="CHEBI:30616"/>
        <dbReference type="ChEBI" id="CHEBI:37565"/>
        <dbReference type="ChEBI" id="CHEBI:58189"/>
        <dbReference type="ChEBI" id="CHEBI:456216"/>
        <dbReference type="EC" id="2.7.4.6"/>
    </reaction>
</comment>
<comment type="catalytic activity">
    <reaction evidence="2">
        <text>UDP + ATP = UTP + ADP</text>
        <dbReference type="Rhea" id="RHEA:25098"/>
        <dbReference type="ChEBI" id="CHEBI:30616"/>
        <dbReference type="ChEBI" id="CHEBI:46398"/>
        <dbReference type="ChEBI" id="CHEBI:58223"/>
        <dbReference type="ChEBI" id="CHEBI:456216"/>
        <dbReference type="EC" id="2.7.4.6"/>
    </reaction>
</comment>
<comment type="catalytic activity">
    <reaction evidence="2">
        <text>GTP + UDP = UTP + GDP</text>
        <dbReference type="Rhea" id="RHEA:79863"/>
        <dbReference type="ChEBI" id="CHEBI:37565"/>
        <dbReference type="ChEBI" id="CHEBI:46398"/>
        <dbReference type="ChEBI" id="CHEBI:58189"/>
        <dbReference type="ChEBI" id="CHEBI:58223"/>
    </reaction>
</comment>
<comment type="catalytic activity">
    <reaction evidence="2">
        <text>dTDP + GTP = dTTP + GDP</text>
        <dbReference type="Rhea" id="RHEA:79867"/>
        <dbReference type="ChEBI" id="CHEBI:37565"/>
        <dbReference type="ChEBI" id="CHEBI:37568"/>
        <dbReference type="ChEBI" id="CHEBI:58189"/>
        <dbReference type="ChEBI" id="CHEBI:58369"/>
    </reaction>
</comment>
<comment type="catalytic activity">
    <reaction evidence="2">
        <text>dCDP + ATP = dCTP + ADP</text>
        <dbReference type="Rhea" id="RHEA:27678"/>
        <dbReference type="ChEBI" id="CHEBI:30616"/>
        <dbReference type="ChEBI" id="CHEBI:58593"/>
        <dbReference type="ChEBI" id="CHEBI:61481"/>
        <dbReference type="ChEBI" id="CHEBI:456216"/>
        <dbReference type="EC" id="2.7.4.6"/>
    </reaction>
</comment>
<comment type="catalytic activity">
    <reaction evidence="2">
        <text>dCDP + GTP = dCTP + GDP</text>
        <dbReference type="Rhea" id="RHEA:79875"/>
        <dbReference type="ChEBI" id="CHEBI:37565"/>
        <dbReference type="ChEBI" id="CHEBI:58189"/>
        <dbReference type="ChEBI" id="CHEBI:58593"/>
        <dbReference type="ChEBI" id="CHEBI:61481"/>
    </reaction>
</comment>
<comment type="catalytic activity">
    <reaction evidence="2">
        <text>dGDP + ATP = dGTP + ADP</text>
        <dbReference type="Rhea" id="RHEA:27690"/>
        <dbReference type="ChEBI" id="CHEBI:30616"/>
        <dbReference type="ChEBI" id="CHEBI:58595"/>
        <dbReference type="ChEBI" id="CHEBI:61429"/>
        <dbReference type="ChEBI" id="CHEBI:456216"/>
        <dbReference type="EC" id="2.7.4.6"/>
    </reaction>
</comment>
<comment type="catalytic activity">
    <reaction evidence="2">
        <text>dTDP + ATP = dTTP + ADP</text>
        <dbReference type="Rhea" id="RHEA:27682"/>
        <dbReference type="ChEBI" id="CHEBI:30616"/>
        <dbReference type="ChEBI" id="CHEBI:37568"/>
        <dbReference type="ChEBI" id="CHEBI:58369"/>
        <dbReference type="ChEBI" id="CHEBI:456216"/>
        <dbReference type="EC" id="2.7.4.6"/>
    </reaction>
</comment>
<comment type="catalytic activity">
    <reaction evidence="2">
        <text>dADP + GTP = dATP + GDP</text>
        <dbReference type="Rhea" id="RHEA:79871"/>
        <dbReference type="ChEBI" id="CHEBI:37565"/>
        <dbReference type="ChEBI" id="CHEBI:57667"/>
        <dbReference type="ChEBI" id="CHEBI:58189"/>
        <dbReference type="ChEBI" id="CHEBI:61404"/>
    </reaction>
</comment>
<comment type="subcellular location">
    <subcellularLocation>
        <location evidence="2">Cytoplasm</location>
    </subcellularLocation>
    <subcellularLocation>
        <location evidence="2">Nucleus</location>
    </subcellularLocation>
    <subcellularLocation>
        <location evidence="5">Cell projection</location>
        <location evidence="5">Cilium</location>
        <location evidence="5">Flagellum</location>
    </subcellularLocation>
</comment>
<comment type="tissue specificity">
    <text evidence="5">Highly expressed in the testis.</text>
</comment>
<comment type="disruption phenotype">
    <text evidence="5">Mice lacking Ak9 do not display developmental abnormalities and exhibit normal spermatogenesis with normal sperm counts and architecture. However, spermatozoa progressive motility is markedly reduced.</text>
</comment>
<comment type="similarity">
    <text evidence="6">Belongs to the adenylate kinase family.</text>
</comment>
<organism>
    <name type="scientific">Mus musculus</name>
    <name type="common">Mouse</name>
    <dbReference type="NCBI Taxonomy" id="10090"/>
    <lineage>
        <taxon>Eukaryota</taxon>
        <taxon>Metazoa</taxon>
        <taxon>Chordata</taxon>
        <taxon>Craniata</taxon>
        <taxon>Vertebrata</taxon>
        <taxon>Euteleostomi</taxon>
        <taxon>Mammalia</taxon>
        <taxon>Eutheria</taxon>
        <taxon>Euarchontoglires</taxon>
        <taxon>Glires</taxon>
        <taxon>Rodentia</taxon>
        <taxon>Myomorpha</taxon>
        <taxon>Muroidea</taxon>
        <taxon>Muridae</taxon>
        <taxon>Murinae</taxon>
        <taxon>Mus</taxon>
        <taxon>Mus</taxon>
    </lineage>
</organism>
<sequence>MASEEKTEELHPFTDIFNEDETDRNCLLSKPTCFIIFGKPGAGKTTLARNIAQAWKCIRVEALSVLEEHIAAEKETGAMLQSLLVSGHSIPDELVTKLILEKIKSPEVAHFGYILTEMPSLAQDNMTSLKQIELVKNLELQPDIIINIKCSDYDLCQRTCGQRQHSTTGYVYTREQWDPEIIESRRRKKRDFPKEGKSEEEEEEEEQEEEEAFIAEMQMVAEILQHLVQRPEDYLENVEITVKLYKELLLSALEEVMAEHNPQYLIELDGNKSPEELFMTVIERLKYLNVRRAAVITKLQGTEEEMTDIIDTEELFRTVSSYKLIAPRYRWYRSKWARSCPVSLKDGNIYSGAADYTVSFLGKMYCLSSEETLKLFSLNPRPFLLPPMPLPPCKVFIFGPEHIGKTTLANLIAEHFKAKVIDYAKLVQPRFDSAREKLIKDTITEATNTAIKVVQQRLLNEKQAKQQEERTLKELQVQYSKREYNDFLSKSSEELPSLENTGSKLSSLEIGQEDKSKSETTITGDQVKDVSTEESIEEVTENHPEVFAILEDTLRHAKELNFEQPHDKQAEILEEVIKETEDNKNRFPGAPKHGGWIVENFPLVRELWLSLIEKALLPDLVVYLSDAESNGKHVLNRLYLKNKAEIDGKILERLQEEAQAKKREEEEIRKVKEEELRLEEEKQRLMELATKKSKGRHRLTTLVAHHLALPYPDYPDNEAEEEVEDSEIHEESEAQEIPEYTRGSSLPEASETSETPEGDHEPEAEFKPPGDTAVEAETEKDPKEGLGSEDLLKVMLPEFPEDGYPNVPEMEPLKEVLNNHILSWKQLEQTIMDNVVSTLTVDVSNKTPQELLQRVVETMERPFKYSAWELNAEDYEEEAEDYQAETEIDEEQEEEEEEEEEGEEKIKEKRRHMGDTKHFCPVVLKENFVLQPGNPDEAVKYREKIYYFSSTEAKEKFLEHPEDYVSQNEPLKAPPLRICLLGPHGSGKTVCARKLAENFGIFHIQFDEFLQEKMLLKAERKFGPEFEDDSEEEQLVKQELEELAAQANVKIEEDTTKKQLPDVQLTEEEEAIKLSLTDNEPLPSEILDSILSEWWLKEPIRSTGFILDGFPRHPEEAQFLGERGFFPDAAVIIQVDDQDIFDRLLPAQVQKWKTKQHKKLERKKLIKDLKTKIKEDMVAKRRAELILEREKKRREDGTFRDEDEFSDEDADYEDDIENILEEEFPKDEEEMSEEDEEQEADATERLRNELGEKFETETNNIQSIQDEFDKVLIPIIMVNGARKMHIVQYVMNMKLKPLVENRESIFEKCYPVSSHLAHKMLSYTYKHMSSFGYWDPVKLSEGETIKPVENAENPLNPVIHRHYIYFLSNKQTKEKFMMNPIKYIRQPKPKATMPVRIMIVGPPKSGKTTVAKKLASDYGLRCLSVGDALRGMLNNHPDSELSLMLNWHLHKGKTVPDELAIQALDISLMESVCNTIGVVIDGYPVTPHQMDLLEARSIIPMVIFELHVPSKEIFKRLLLEKKTEQSMSYPLHNSSQIIAYKNAKYHKNINEIRQFYQKQHQNWHVIDGFHSKWWVWNEVLKDIQQMNKYIQTYMKKIKEGKAACIDKLCITPEELIARLGEFKQFCPVSLAESNELIDCSVTSSLEFAAEFRGHYYKMSSQEKLNKFLKDPELYVPPLAPHPLPPDDLLPKRLTLSELKSRFPKCAELQGYCPVTYQDGKQRYEALVPGNIRYALEYRNCIYICESEEKLQKFMRSPMQYWNQKLPRKLPPLKESIHLTSLPLPGYLEQGTATSLIKAMNAAGNLKPKLPFLSVRRSVLLYIAFHLKAFNPKGSEYSRKKYKKKLEQFVERCELITYLSSKMTRKYKEPQFRAIDFDHKLQTFLSLKNIDPVTG</sequence>
<gene>
    <name evidence="8" type="primary">Ak9</name>
</gene>
<dbReference type="EC" id="2.7.4.4" evidence="2"/>
<dbReference type="EC" id="2.7.4.6" evidence="2"/>
<dbReference type="EMBL" id="AC122332">
    <property type="status" value="NOT_ANNOTATED_CDS"/>
    <property type="molecule type" value="Genomic_DNA"/>
</dbReference>
<dbReference type="EMBL" id="AC153360">
    <property type="status" value="NOT_ANNOTATED_CDS"/>
    <property type="molecule type" value="Genomic_DNA"/>
</dbReference>
<dbReference type="SMR" id="G3UYQ4"/>
<dbReference type="FunCoup" id="G3UYQ4">
    <property type="interactions" value="1821"/>
</dbReference>
<dbReference type="IntAct" id="G3UYQ4">
    <property type="interactions" value="1"/>
</dbReference>
<dbReference type="MINT" id="G3UYQ4"/>
<dbReference type="STRING" id="10090.ENSMUSP00000134177"/>
<dbReference type="GlyGen" id="G3UYQ4">
    <property type="glycosylation" value="1 site"/>
</dbReference>
<dbReference type="iPTMnet" id="G3UYQ4"/>
<dbReference type="PhosphoSitePlus" id="G3UYQ4"/>
<dbReference type="jPOST" id="G3UYQ4"/>
<dbReference type="PaxDb" id="10090-ENSMUSP00000134177"/>
<dbReference type="PeptideAtlas" id="G3UYQ4"/>
<dbReference type="ProteomicsDB" id="367604"/>
<dbReference type="Antibodypedia" id="32270">
    <property type="antibodies" value="126 antibodies from 17 providers"/>
</dbReference>
<dbReference type="Ensembl" id="ENSMUST00000173494.4">
    <property type="protein sequence ID" value="ENSMUSP00000134177.3"/>
    <property type="gene ID" value="ENSMUSG00000091415.6"/>
</dbReference>
<dbReference type="AGR" id="MGI:2685080"/>
<dbReference type="MGI" id="MGI:2685080">
    <property type="gene designation" value="Ak9"/>
</dbReference>
<dbReference type="VEuPathDB" id="HostDB:ENSMUSG00000091415"/>
<dbReference type="eggNOG" id="KOG3079">
    <property type="taxonomic scope" value="Eukaryota"/>
</dbReference>
<dbReference type="GeneTree" id="ENSGT00740000115564"/>
<dbReference type="HOGENOM" id="CLU_275193_0_0_1"/>
<dbReference type="InParanoid" id="G3UYQ4"/>
<dbReference type="OMA" id="MESVCGT"/>
<dbReference type="OrthoDB" id="439792at2759"/>
<dbReference type="PhylomeDB" id="G3UYQ4"/>
<dbReference type="TreeFam" id="TF330805"/>
<dbReference type="Reactome" id="R-MMU-499943">
    <property type="pathway name" value="Interconversion of nucleotide di- and triphosphates"/>
</dbReference>
<dbReference type="Proteomes" id="UP000000589">
    <property type="component" value="Chromosome 10"/>
</dbReference>
<dbReference type="RNAct" id="G3UYQ4">
    <property type="molecule type" value="protein"/>
</dbReference>
<dbReference type="Bgee" id="ENSMUSG00000091415">
    <property type="expression patterns" value="Expressed in fourth ventricle and 19 other cell types or tissues"/>
</dbReference>
<dbReference type="GO" id="GO:0005829">
    <property type="term" value="C:cytosol"/>
    <property type="evidence" value="ECO:0007669"/>
    <property type="project" value="Ensembl"/>
</dbReference>
<dbReference type="GO" id="GO:0015630">
    <property type="term" value="C:microtubule cytoskeleton"/>
    <property type="evidence" value="ECO:0007669"/>
    <property type="project" value="Ensembl"/>
</dbReference>
<dbReference type="GO" id="GO:0031514">
    <property type="term" value="C:motile cilium"/>
    <property type="evidence" value="ECO:0007669"/>
    <property type="project" value="UniProtKB-SubCell"/>
</dbReference>
<dbReference type="GO" id="GO:0031965">
    <property type="term" value="C:nuclear membrane"/>
    <property type="evidence" value="ECO:0007669"/>
    <property type="project" value="Ensembl"/>
</dbReference>
<dbReference type="GO" id="GO:0005654">
    <property type="term" value="C:nucleoplasm"/>
    <property type="evidence" value="ECO:0007669"/>
    <property type="project" value="Ensembl"/>
</dbReference>
<dbReference type="GO" id="GO:0005524">
    <property type="term" value="F:ATP binding"/>
    <property type="evidence" value="ECO:0007669"/>
    <property type="project" value="UniProtKB-KW"/>
</dbReference>
<dbReference type="GO" id="GO:0016887">
    <property type="term" value="F:ATP hydrolysis activity"/>
    <property type="evidence" value="ECO:0007669"/>
    <property type="project" value="InterPro"/>
</dbReference>
<dbReference type="GO" id="GO:0004550">
    <property type="term" value="F:nucleoside diphosphate kinase activity"/>
    <property type="evidence" value="ECO:0007669"/>
    <property type="project" value="UniProtKB-EC"/>
</dbReference>
<dbReference type="GO" id="GO:0050145">
    <property type="term" value="F:nucleoside monophosphate kinase activity"/>
    <property type="evidence" value="ECO:0007669"/>
    <property type="project" value="Ensembl"/>
</dbReference>
<dbReference type="CDD" id="cd01428">
    <property type="entry name" value="ADK"/>
    <property type="match status" value="2"/>
</dbReference>
<dbReference type="FunFam" id="3.40.50.300:FF:001757">
    <property type="entry name" value="Adenylate kinase 9"/>
    <property type="match status" value="1"/>
</dbReference>
<dbReference type="Gene3D" id="3.40.50.300">
    <property type="entry name" value="P-loop containing nucleotide triphosphate hydrolases"/>
    <property type="match status" value="4"/>
</dbReference>
<dbReference type="InterPro" id="IPR003593">
    <property type="entry name" value="AAA+_ATPase"/>
</dbReference>
<dbReference type="InterPro" id="IPR000850">
    <property type="entry name" value="Adenylat/UMP-CMP_kin"/>
</dbReference>
<dbReference type="InterPro" id="IPR027417">
    <property type="entry name" value="P-loop_NTPase"/>
</dbReference>
<dbReference type="PANTHER" id="PTHR23359">
    <property type="entry name" value="NUCLEOTIDE KINASE"/>
    <property type="match status" value="1"/>
</dbReference>
<dbReference type="Pfam" id="PF00406">
    <property type="entry name" value="ADK"/>
    <property type="match status" value="2"/>
</dbReference>
<dbReference type="SMART" id="SM00382">
    <property type="entry name" value="AAA"/>
    <property type="match status" value="4"/>
</dbReference>
<dbReference type="SUPFAM" id="SSF52540">
    <property type="entry name" value="P-loop containing nucleoside triphosphate hydrolases"/>
    <property type="match status" value="4"/>
</dbReference>
<feature type="chain" id="PRO_0000460728" description="Adenylate kinase 9">
    <location>
        <begin position="1"/>
        <end position="1894"/>
    </location>
</feature>
<feature type="region of interest" description="Adenylate kinase 1" evidence="2">
    <location>
        <begin position="32"/>
        <end position="286"/>
    </location>
</feature>
<feature type="region of interest" description="NMP 1" evidence="1">
    <location>
        <begin position="61"/>
        <end position="90"/>
    </location>
</feature>
<feature type="region of interest" description="LID 1" evidence="1">
    <location>
        <begin position="161"/>
        <end position="206"/>
    </location>
</feature>
<feature type="region of interest" description="Disordered" evidence="4">
    <location>
        <begin position="188"/>
        <end position="211"/>
    </location>
</feature>
<feature type="region of interest" description="Disordered" evidence="4">
    <location>
        <begin position="492"/>
        <end position="533"/>
    </location>
</feature>
<feature type="region of interest" description="Disordered" evidence="4">
    <location>
        <begin position="710"/>
        <end position="789"/>
    </location>
</feature>
<feature type="region of interest" description="Disordered" evidence="4">
    <location>
        <begin position="876"/>
        <end position="911"/>
    </location>
</feature>
<feature type="region of interest" description="Adenylate kinase 2" evidence="2">
    <location>
        <begin position="976"/>
        <end position="1187"/>
    </location>
</feature>
<feature type="region of interest" description="NMP 2" evidence="1">
    <location>
        <begin position="1005"/>
        <end position="1036"/>
    </location>
</feature>
<feature type="region of interest" description="LID 2" evidence="1">
    <location>
        <begin position="1108"/>
        <end position="1128"/>
    </location>
</feature>
<feature type="region of interest" description="Disordered" evidence="4">
    <location>
        <begin position="1223"/>
        <end position="1243"/>
    </location>
</feature>
<feature type="region of interest" description="Adenylate kinase 3" evidence="2">
    <location>
        <begin position="1395"/>
        <end position="1584"/>
    </location>
</feature>
<feature type="region of interest" description="NMP 3" evidence="1">
    <location>
        <begin position="1424"/>
        <end position="1455"/>
    </location>
</feature>
<feature type="region of interest" description="LID 3" evidence="1">
    <location>
        <begin position="1519"/>
        <end position="1533"/>
    </location>
</feature>
<feature type="coiled-coil region" evidence="3">
    <location>
        <begin position="451"/>
        <end position="478"/>
    </location>
</feature>
<feature type="coiled-coil region" evidence="3">
    <location>
        <begin position="651"/>
        <end position="691"/>
    </location>
</feature>
<feature type="compositionally biased region" description="Acidic residues" evidence="4">
    <location>
        <begin position="198"/>
        <end position="211"/>
    </location>
</feature>
<feature type="compositionally biased region" description="Acidic residues" evidence="4">
    <location>
        <begin position="715"/>
        <end position="736"/>
    </location>
</feature>
<feature type="compositionally biased region" description="Basic and acidic residues" evidence="4">
    <location>
        <begin position="757"/>
        <end position="768"/>
    </location>
</feature>
<feature type="compositionally biased region" description="Basic and acidic residues" evidence="4">
    <location>
        <begin position="777"/>
        <end position="789"/>
    </location>
</feature>
<feature type="compositionally biased region" description="Acidic residues" evidence="4">
    <location>
        <begin position="876"/>
        <end position="903"/>
    </location>
</feature>
<feature type="compositionally biased region" description="Acidic residues" evidence="4">
    <location>
        <begin position="1223"/>
        <end position="1241"/>
    </location>
</feature>
<feature type="binding site" evidence="1">
    <location>
        <begin position="41"/>
        <end position="46"/>
    </location>
    <ligand>
        <name>ATP</name>
        <dbReference type="ChEBI" id="CHEBI:30616"/>
        <label>1</label>
    </ligand>
</feature>
<feature type="binding site" evidence="1">
    <location>
        <begin position="117"/>
        <end position="120"/>
    </location>
    <ligand>
        <name>AMP</name>
        <dbReference type="ChEBI" id="CHEBI:456215"/>
        <label>1</label>
    </ligand>
</feature>
<feature type="binding site" evidence="1">
    <location>
        <position position="230"/>
    </location>
    <ligand>
        <name>AMP</name>
        <dbReference type="ChEBI" id="CHEBI:456215"/>
        <label>1</label>
    </ligand>
</feature>
<feature type="binding site" evidence="1">
    <location>
        <begin position="985"/>
        <end position="990"/>
    </location>
    <ligand>
        <name>ATP</name>
        <dbReference type="ChEBI" id="CHEBI:30616"/>
        <label>2</label>
    </ligand>
</feature>
<feature type="binding site" evidence="1">
    <location>
        <begin position="1034"/>
        <end position="1036"/>
    </location>
    <ligand>
        <name>AMP</name>
        <dbReference type="ChEBI" id="CHEBI:456215"/>
        <label>2</label>
    </ligand>
</feature>
<feature type="binding site" evidence="1">
    <location>
        <begin position="1063"/>
        <end position="1066"/>
    </location>
    <ligand>
        <name>AMP</name>
        <dbReference type="ChEBI" id="CHEBI:456215"/>
        <label>2</label>
    </ligand>
</feature>
<feature type="binding site" evidence="1">
    <location>
        <begin position="1404"/>
        <end position="1409"/>
    </location>
    <ligand>
        <name>ATP</name>
        <dbReference type="ChEBI" id="CHEBI:30616"/>
        <label>3</label>
    </ligand>
</feature>
<feature type="binding site" evidence="1">
    <location>
        <position position="1430"/>
    </location>
    <ligand>
        <name>AMP</name>
        <dbReference type="ChEBI" id="CHEBI:456215"/>
        <label>3</label>
    </ligand>
</feature>
<feature type="binding site" evidence="1">
    <location>
        <begin position="1482"/>
        <end position="1485"/>
    </location>
    <ligand>
        <name>AMP</name>
        <dbReference type="ChEBI" id="CHEBI:456215"/>
        <label>3</label>
    </ligand>
</feature>
<feature type="binding site" evidence="1">
    <location>
        <position position="1489"/>
    </location>
    <ligand>
        <name>AMP</name>
        <dbReference type="ChEBI" id="CHEBI:456215"/>
        <label>3</label>
    </ligand>
</feature>
<keyword id="KW-0067">ATP-binding</keyword>
<keyword id="KW-0966">Cell projection</keyword>
<keyword id="KW-0969">Cilium</keyword>
<keyword id="KW-0175">Coiled coil</keyword>
<keyword id="KW-0963">Cytoplasm</keyword>
<keyword id="KW-0282">Flagellum</keyword>
<keyword id="KW-0418">Kinase</keyword>
<keyword id="KW-0546">Nucleotide metabolism</keyword>
<keyword id="KW-0547">Nucleotide-binding</keyword>
<keyword id="KW-0539">Nucleus</keyword>
<keyword id="KW-1185">Reference proteome</keyword>
<keyword id="KW-0808">Transferase</keyword>
<evidence type="ECO:0000250" key="1">
    <source>
        <dbReference type="UniProtKB" id="P69441"/>
    </source>
</evidence>
<evidence type="ECO:0000250" key="2">
    <source>
        <dbReference type="UniProtKB" id="Q5TCS8"/>
    </source>
</evidence>
<evidence type="ECO:0000255" key="3"/>
<evidence type="ECO:0000256" key="4">
    <source>
        <dbReference type="SAM" id="MobiDB-lite"/>
    </source>
</evidence>
<evidence type="ECO:0000269" key="5">
    <source>
    </source>
</evidence>
<evidence type="ECO:0000305" key="6"/>
<evidence type="ECO:0000305" key="7">
    <source>
    </source>
</evidence>
<evidence type="ECO:0000312" key="8">
    <source>
        <dbReference type="MGI" id="MGI:2685080"/>
    </source>
</evidence>